<sequence>MAEVANNEAQQNFQIQRVFLKDISFEAPNSPDMFQKEWNPDVKLDLDTQSRELGEGVYEVILRLTVTVKNAEETAFLCEVQQGGIFTVSGMEAPQLAHCLGAFSPNILFPYARETISSLVVKGTFPQLNLAPVNFDALFMNYLQNQAEANTESTEKA</sequence>
<protein>
    <recommendedName>
        <fullName evidence="1">Protein-export protein SecB</fullName>
    </recommendedName>
</protein>
<organism>
    <name type="scientific">Photobacterium profundum (strain SS9)</name>
    <dbReference type="NCBI Taxonomy" id="298386"/>
    <lineage>
        <taxon>Bacteria</taxon>
        <taxon>Pseudomonadati</taxon>
        <taxon>Pseudomonadota</taxon>
        <taxon>Gammaproteobacteria</taxon>
        <taxon>Vibrionales</taxon>
        <taxon>Vibrionaceae</taxon>
        <taxon>Photobacterium</taxon>
    </lineage>
</organism>
<feature type="chain" id="PRO_0000055392" description="Protein-export protein SecB">
    <location>
        <begin position="1"/>
        <end position="157"/>
    </location>
</feature>
<dbReference type="EMBL" id="CR378663">
    <property type="protein sequence ID" value="CAG18665.1"/>
    <property type="molecule type" value="Genomic_DNA"/>
</dbReference>
<dbReference type="RefSeq" id="WP_011217041.1">
    <property type="nucleotide sequence ID" value="NC_006370.1"/>
</dbReference>
<dbReference type="SMR" id="Q6LVL0"/>
<dbReference type="STRING" id="298386.PBPRA0226"/>
<dbReference type="KEGG" id="ppr:PBPRA0226"/>
<dbReference type="eggNOG" id="COG1952">
    <property type="taxonomic scope" value="Bacteria"/>
</dbReference>
<dbReference type="HOGENOM" id="CLU_111574_1_0_6"/>
<dbReference type="Proteomes" id="UP000000593">
    <property type="component" value="Chromosome 1"/>
</dbReference>
<dbReference type="GO" id="GO:0005737">
    <property type="term" value="C:cytoplasm"/>
    <property type="evidence" value="ECO:0007669"/>
    <property type="project" value="UniProtKB-SubCell"/>
</dbReference>
<dbReference type="GO" id="GO:0051082">
    <property type="term" value="F:unfolded protein binding"/>
    <property type="evidence" value="ECO:0007669"/>
    <property type="project" value="InterPro"/>
</dbReference>
<dbReference type="GO" id="GO:0006457">
    <property type="term" value="P:protein folding"/>
    <property type="evidence" value="ECO:0007669"/>
    <property type="project" value="UniProtKB-UniRule"/>
</dbReference>
<dbReference type="GO" id="GO:0051262">
    <property type="term" value="P:protein tetramerization"/>
    <property type="evidence" value="ECO:0007669"/>
    <property type="project" value="InterPro"/>
</dbReference>
<dbReference type="GO" id="GO:0015031">
    <property type="term" value="P:protein transport"/>
    <property type="evidence" value="ECO:0007669"/>
    <property type="project" value="UniProtKB-UniRule"/>
</dbReference>
<dbReference type="Gene3D" id="3.10.420.10">
    <property type="entry name" value="SecB-like"/>
    <property type="match status" value="1"/>
</dbReference>
<dbReference type="HAMAP" id="MF_00821">
    <property type="entry name" value="SecB"/>
    <property type="match status" value="1"/>
</dbReference>
<dbReference type="InterPro" id="IPR003708">
    <property type="entry name" value="SecB"/>
</dbReference>
<dbReference type="InterPro" id="IPR035958">
    <property type="entry name" value="SecB-like_sf"/>
</dbReference>
<dbReference type="NCBIfam" id="NF004393">
    <property type="entry name" value="PRK05751.1-4"/>
    <property type="match status" value="1"/>
</dbReference>
<dbReference type="NCBIfam" id="TIGR00809">
    <property type="entry name" value="secB"/>
    <property type="match status" value="1"/>
</dbReference>
<dbReference type="PANTHER" id="PTHR36918">
    <property type="match status" value="1"/>
</dbReference>
<dbReference type="PANTHER" id="PTHR36918:SF1">
    <property type="entry name" value="PROTEIN-EXPORT PROTEIN SECB"/>
    <property type="match status" value="1"/>
</dbReference>
<dbReference type="Pfam" id="PF02556">
    <property type="entry name" value="SecB"/>
    <property type="match status" value="1"/>
</dbReference>
<dbReference type="PRINTS" id="PR01594">
    <property type="entry name" value="SECBCHAPRONE"/>
</dbReference>
<dbReference type="SUPFAM" id="SSF54611">
    <property type="entry name" value="SecB-like"/>
    <property type="match status" value="1"/>
</dbReference>
<accession>Q6LVL0</accession>
<name>SECB_PHOPR</name>
<evidence type="ECO:0000255" key="1">
    <source>
        <dbReference type="HAMAP-Rule" id="MF_00821"/>
    </source>
</evidence>
<proteinExistence type="inferred from homology"/>
<keyword id="KW-0143">Chaperone</keyword>
<keyword id="KW-0963">Cytoplasm</keyword>
<keyword id="KW-0653">Protein transport</keyword>
<keyword id="KW-1185">Reference proteome</keyword>
<keyword id="KW-0811">Translocation</keyword>
<keyword id="KW-0813">Transport</keyword>
<reference key="1">
    <citation type="journal article" date="2005" name="Science">
        <title>Life at depth: Photobacterium profundum genome sequence and expression analysis.</title>
        <authorList>
            <person name="Vezzi A."/>
            <person name="Campanaro S."/>
            <person name="D'Angelo M."/>
            <person name="Simonato F."/>
            <person name="Vitulo N."/>
            <person name="Lauro F.M."/>
            <person name="Cestaro A."/>
            <person name="Malacrida G."/>
            <person name="Simionati B."/>
            <person name="Cannata N."/>
            <person name="Romualdi C."/>
            <person name="Bartlett D.H."/>
            <person name="Valle G."/>
        </authorList>
    </citation>
    <scope>NUCLEOTIDE SEQUENCE [LARGE SCALE GENOMIC DNA]</scope>
    <source>
        <strain>ATCC BAA-1253 / SS9</strain>
    </source>
</reference>
<gene>
    <name evidence="1" type="primary">secB</name>
    <name type="ordered locus">PBPRA0226</name>
</gene>
<comment type="function">
    <text evidence="1">One of the proteins required for the normal export of preproteins out of the cell cytoplasm. It is a molecular chaperone that binds to a subset of precursor proteins, maintaining them in a translocation-competent state. It also specifically binds to its receptor SecA.</text>
</comment>
<comment type="subunit">
    <text evidence="1">Homotetramer, a dimer of dimers. One homotetramer interacts with 1 SecA dimer.</text>
</comment>
<comment type="subcellular location">
    <subcellularLocation>
        <location evidence="1">Cytoplasm</location>
    </subcellularLocation>
</comment>
<comment type="similarity">
    <text evidence="1">Belongs to the SecB family.</text>
</comment>